<evidence type="ECO:0000255" key="1">
    <source>
        <dbReference type="HAMAP-Rule" id="MF_00791"/>
    </source>
</evidence>
<feature type="chain" id="PRO_1000083610" description="Protein ApaG">
    <location>
        <begin position="1"/>
        <end position="130"/>
    </location>
</feature>
<feature type="domain" description="ApaG" evidence="1">
    <location>
        <begin position="3"/>
        <end position="127"/>
    </location>
</feature>
<dbReference type="EMBL" id="AE017223">
    <property type="protein sequence ID" value="AAX73730.1"/>
    <property type="molecule type" value="Genomic_DNA"/>
</dbReference>
<dbReference type="RefSeq" id="WP_002963468.1">
    <property type="nucleotide sequence ID" value="NC_006932.1"/>
</dbReference>
<dbReference type="SMR" id="Q57F54"/>
<dbReference type="EnsemblBacteria" id="AAX73730">
    <property type="protein sequence ID" value="AAX73730"/>
    <property type="gene ID" value="BruAb1_0330"/>
</dbReference>
<dbReference type="GeneID" id="93017229"/>
<dbReference type="KEGG" id="bmb:BruAb1_0330"/>
<dbReference type="HOGENOM" id="CLU_128074_1_0_5"/>
<dbReference type="Proteomes" id="UP000000540">
    <property type="component" value="Chromosome I"/>
</dbReference>
<dbReference type="GO" id="GO:0070987">
    <property type="term" value="P:error-free translesion synthesis"/>
    <property type="evidence" value="ECO:0007669"/>
    <property type="project" value="TreeGrafter"/>
</dbReference>
<dbReference type="Gene3D" id="2.60.40.1470">
    <property type="entry name" value="ApaG domain"/>
    <property type="match status" value="1"/>
</dbReference>
<dbReference type="HAMAP" id="MF_00791">
    <property type="entry name" value="ApaG"/>
    <property type="match status" value="1"/>
</dbReference>
<dbReference type="InterPro" id="IPR007474">
    <property type="entry name" value="ApaG_domain"/>
</dbReference>
<dbReference type="InterPro" id="IPR036767">
    <property type="entry name" value="ApaG_sf"/>
</dbReference>
<dbReference type="InterPro" id="IPR023065">
    <property type="entry name" value="Uncharacterised_ApaG"/>
</dbReference>
<dbReference type="NCBIfam" id="NF003967">
    <property type="entry name" value="PRK05461.1"/>
    <property type="match status" value="1"/>
</dbReference>
<dbReference type="PANTHER" id="PTHR14289">
    <property type="entry name" value="F-BOX ONLY PROTEIN 3"/>
    <property type="match status" value="1"/>
</dbReference>
<dbReference type="PANTHER" id="PTHR14289:SF16">
    <property type="entry name" value="POLYMERASE DELTA-INTERACTING PROTEIN 2"/>
    <property type="match status" value="1"/>
</dbReference>
<dbReference type="Pfam" id="PF04379">
    <property type="entry name" value="DUF525"/>
    <property type="match status" value="1"/>
</dbReference>
<dbReference type="SUPFAM" id="SSF110069">
    <property type="entry name" value="ApaG-like"/>
    <property type="match status" value="1"/>
</dbReference>
<dbReference type="PROSITE" id="PS51087">
    <property type="entry name" value="APAG"/>
    <property type="match status" value="1"/>
</dbReference>
<accession>Q57F54</accession>
<proteinExistence type="inferred from homology"/>
<sequence length="130" mass="14562">MYSAVTRGIEVTVEPFYLEVQSEPEENRYVWGYRVTIVNNSSETVQLCSRYWQITDANGHVQEVRGSGVVGKQPVLDPGDSYQYSSGCPLTTSSGVMVGRYQMKGEDGAQFEIEIPAFSLDVPEQRRTLN</sequence>
<protein>
    <recommendedName>
        <fullName evidence="1">Protein ApaG</fullName>
    </recommendedName>
</protein>
<reference key="1">
    <citation type="journal article" date="2005" name="J. Bacteriol.">
        <title>Completion of the genome sequence of Brucella abortus and comparison to the highly similar genomes of Brucella melitensis and Brucella suis.</title>
        <authorList>
            <person name="Halling S.M."/>
            <person name="Peterson-Burch B.D."/>
            <person name="Bricker B.J."/>
            <person name="Zuerner R.L."/>
            <person name="Qing Z."/>
            <person name="Li L.-L."/>
            <person name="Kapur V."/>
            <person name="Alt D.P."/>
            <person name="Olsen S.C."/>
        </authorList>
    </citation>
    <scope>NUCLEOTIDE SEQUENCE [LARGE SCALE GENOMIC DNA]</scope>
    <source>
        <strain>9-941</strain>
    </source>
</reference>
<organism>
    <name type="scientific">Brucella abortus biovar 1 (strain 9-941)</name>
    <dbReference type="NCBI Taxonomy" id="262698"/>
    <lineage>
        <taxon>Bacteria</taxon>
        <taxon>Pseudomonadati</taxon>
        <taxon>Pseudomonadota</taxon>
        <taxon>Alphaproteobacteria</taxon>
        <taxon>Hyphomicrobiales</taxon>
        <taxon>Brucellaceae</taxon>
        <taxon>Brucella/Ochrobactrum group</taxon>
        <taxon>Brucella</taxon>
    </lineage>
</organism>
<gene>
    <name evidence="1" type="primary">apaG</name>
    <name type="ordered locus">BruAb1_0330</name>
</gene>
<name>APAG_BRUAB</name>